<reference key="1">
    <citation type="journal article" date="1997" name="Nature">
        <title>The nucleotide sequence of Saccharomyces cerevisiae chromosome XIV and its evolutionary implications.</title>
        <authorList>
            <person name="Philippsen P."/>
            <person name="Kleine K."/>
            <person name="Poehlmann R."/>
            <person name="Duesterhoeft A."/>
            <person name="Hamberg K."/>
            <person name="Hegemann J.H."/>
            <person name="Obermaier B."/>
            <person name="Urrestarazu L.A."/>
            <person name="Aert R."/>
            <person name="Albermann K."/>
            <person name="Altmann R."/>
            <person name="Andre B."/>
            <person name="Baladron V."/>
            <person name="Ballesta J.P.G."/>
            <person name="Becam A.-M."/>
            <person name="Beinhauer J.D."/>
            <person name="Boskovic J."/>
            <person name="Buitrago M.J."/>
            <person name="Bussereau F."/>
            <person name="Coster F."/>
            <person name="Crouzet M."/>
            <person name="D'Angelo M."/>
            <person name="Dal Pero F."/>
            <person name="De Antoni A."/>
            <person name="del Rey F."/>
            <person name="Doignon F."/>
            <person name="Domdey H."/>
            <person name="Dubois E."/>
            <person name="Fiedler T.A."/>
            <person name="Fleig U."/>
            <person name="Floeth M."/>
            <person name="Fritz C."/>
            <person name="Gaillardin C."/>
            <person name="Garcia-Cantalejo J.M."/>
            <person name="Glansdorff N."/>
            <person name="Goffeau A."/>
            <person name="Gueldener U."/>
            <person name="Herbert C.J."/>
            <person name="Heumann K."/>
            <person name="Heuss-Neitzel D."/>
            <person name="Hilbert H."/>
            <person name="Hinni K."/>
            <person name="Iraqui Houssaini I."/>
            <person name="Jacquet M."/>
            <person name="Jimenez A."/>
            <person name="Jonniaux J.-L."/>
            <person name="Karpfinger-Hartl L."/>
            <person name="Lanfranchi G."/>
            <person name="Lepingle A."/>
            <person name="Levesque H."/>
            <person name="Lyck R."/>
            <person name="Maftahi M."/>
            <person name="Mallet L."/>
            <person name="Maurer C.T.C."/>
            <person name="Messenguy F."/>
            <person name="Mewes H.-W."/>
            <person name="Moestl D."/>
            <person name="Nasr F."/>
            <person name="Nicaud J.-M."/>
            <person name="Niedenthal R.K."/>
            <person name="Pandolfo D."/>
            <person name="Pierard A."/>
            <person name="Piravandi E."/>
            <person name="Planta R.J."/>
            <person name="Pohl T.M."/>
            <person name="Purnelle B."/>
            <person name="Rebischung C."/>
            <person name="Remacha M.A."/>
            <person name="Revuelta J.L."/>
            <person name="Rinke M."/>
            <person name="Saiz J.E."/>
            <person name="Sartorello F."/>
            <person name="Scherens B."/>
            <person name="Sen-Gupta M."/>
            <person name="Soler-Mira A."/>
            <person name="Urbanus J.H.M."/>
            <person name="Valle G."/>
            <person name="Van Dyck L."/>
            <person name="Verhasselt P."/>
            <person name="Vierendeels F."/>
            <person name="Vissers S."/>
            <person name="Voet M."/>
            <person name="Volckaert G."/>
            <person name="Wach A."/>
            <person name="Wambutt R."/>
            <person name="Wedler H."/>
            <person name="Zollner A."/>
            <person name="Hani J."/>
        </authorList>
    </citation>
    <scope>NUCLEOTIDE SEQUENCE [LARGE SCALE GENOMIC DNA]</scope>
    <source>
        <strain>ATCC 204508 / S288c</strain>
    </source>
</reference>
<reference key="2">
    <citation type="journal article" date="2014" name="G3 (Bethesda)">
        <title>The reference genome sequence of Saccharomyces cerevisiae: Then and now.</title>
        <authorList>
            <person name="Engel S.R."/>
            <person name="Dietrich F.S."/>
            <person name="Fisk D.G."/>
            <person name="Binkley G."/>
            <person name="Balakrishnan R."/>
            <person name="Costanzo M.C."/>
            <person name="Dwight S.S."/>
            <person name="Hitz B.C."/>
            <person name="Karra K."/>
            <person name="Nash R.S."/>
            <person name="Weng S."/>
            <person name="Wong E.D."/>
            <person name="Lloyd P."/>
            <person name="Skrzypek M.S."/>
            <person name="Miyasato S.R."/>
            <person name="Simison M."/>
            <person name="Cherry J.M."/>
        </authorList>
    </citation>
    <scope>GENOME REANNOTATION</scope>
    <source>
        <strain>ATCC 204508 / S288c</strain>
    </source>
</reference>
<reference key="3">
    <citation type="journal article" date="2003" name="Nature">
        <title>Global analysis of protein expression in yeast.</title>
        <authorList>
            <person name="Ghaemmaghami S."/>
            <person name="Huh W.-K."/>
            <person name="Bower K."/>
            <person name="Howson R.W."/>
            <person name="Belle A."/>
            <person name="Dephoure N."/>
            <person name="O'Shea E.K."/>
            <person name="Weissman J.S."/>
        </authorList>
    </citation>
    <scope>LEVEL OF PROTEIN EXPRESSION [LARGE SCALE ANALYSIS]</scope>
</reference>
<reference key="4">
    <citation type="journal article" date="2000" name="Mol. Microbiol.">
        <title>FAP1, a homologue of human transcription factor NF-X1, competes with rapamycin for binding to FKBP12 in yeast.</title>
        <authorList>
            <person name="Kunz J."/>
            <person name="Loeschmann A."/>
            <person name="Deuter-Reinhard M."/>
            <person name="Hall M.N."/>
        </authorList>
    </citation>
    <scope>FUNCTION</scope>
    <scope>INTERACTION WITH FPR1</scope>
    <scope>SUBCELLULAR LOCATION</scope>
</reference>
<reference key="5">
    <citation type="journal article" date="2008" name="Mol. Cell. Proteomics">
        <title>A multidimensional chromatography technology for in-depth phosphoproteome analysis.</title>
        <authorList>
            <person name="Albuquerque C.P."/>
            <person name="Smolka M.B."/>
            <person name="Payne S.H."/>
            <person name="Bafna V."/>
            <person name="Eng J."/>
            <person name="Zhou H."/>
        </authorList>
    </citation>
    <scope>PHOSPHORYLATION [LARGE SCALE ANALYSIS] AT SER-958</scope>
    <scope>IDENTIFICATION BY MASS SPECTROMETRY [LARGE SCALE ANALYSIS]</scope>
</reference>
<reference key="6">
    <citation type="journal article" date="2009" name="Science">
        <title>Global analysis of Cdk1 substrate phosphorylation sites provides insights into evolution.</title>
        <authorList>
            <person name="Holt L.J."/>
            <person name="Tuch B.B."/>
            <person name="Villen J."/>
            <person name="Johnson A.D."/>
            <person name="Gygi S.P."/>
            <person name="Morgan D.O."/>
        </authorList>
    </citation>
    <scope>PHOSPHORYLATION [LARGE SCALE ANALYSIS] AT THR-951</scope>
    <scope>IDENTIFICATION BY MASS SPECTROMETRY [LARGE SCALE ANALYSIS]</scope>
</reference>
<gene>
    <name type="primary">FAP1</name>
    <name type="ordered locus">YNL023C</name>
    <name type="ORF">N2812</name>
</gene>
<protein>
    <recommendedName>
        <fullName>FKBP12-associated protein 1</fullName>
    </recommendedName>
</protein>
<comment type="function">
    <text evidence="1 4">May play a role in transcription regulation.</text>
</comment>
<comment type="subunit">
    <text evidence="4">Interacts with FPR1.</text>
</comment>
<comment type="subcellular location">
    <subcellularLocation>
        <location evidence="4">Cytoplasm</location>
    </subcellularLocation>
    <subcellularLocation>
        <location evidence="4">Nucleus</location>
    </subcellularLocation>
    <text>Translocates to the nucleus in response to rapamycin.</text>
</comment>
<comment type="miscellaneous">
    <text evidence="5">Present with 589 molecules/cell in log phase SD medium.</text>
</comment>
<comment type="similarity">
    <text evidence="6">Belongs to the NFX1 family.</text>
</comment>
<dbReference type="EMBL" id="Z71299">
    <property type="protein sequence ID" value="CAA95885.1"/>
    <property type="molecule type" value="Genomic_DNA"/>
</dbReference>
<dbReference type="EMBL" id="BK006947">
    <property type="protein sequence ID" value="DAA10522.1"/>
    <property type="molecule type" value="Genomic_DNA"/>
</dbReference>
<dbReference type="PIR" id="S62935">
    <property type="entry name" value="S62935"/>
</dbReference>
<dbReference type="RefSeq" id="NP_014375.1">
    <property type="nucleotide sequence ID" value="NM_001182862.1"/>
</dbReference>
<dbReference type="SMR" id="P53971"/>
<dbReference type="BioGRID" id="35803">
    <property type="interactions" value="150"/>
</dbReference>
<dbReference type="DIP" id="DIP-967N"/>
<dbReference type="FunCoup" id="P53971">
    <property type="interactions" value="1156"/>
</dbReference>
<dbReference type="IntAct" id="P53971">
    <property type="interactions" value="58"/>
</dbReference>
<dbReference type="MINT" id="P53971"/>
<dbReference type="STRING" id="4932.YNL023C"/>
<dbReference type="iPTMnet" id="P53971"/>
<dbReference type="PaxDb" id="4932-YNL023C"/>
<dbReference type="PeptideAtlas" id="P53971"/>
<dbReference type="EnsemblFungi" id="YNL023C_mRNA">
    <property type="protein sequence ID" value="YNL023C"/>
    <property type="gene ID" value="YNL023C"/>
</dbReference>
<dbReference type="GeneID" id="855708"/>
<dbReference type="KEGG" id="sce:YNL023C"/>
<dbReference type="AGR" id="SGD:S000004968"/>
<dbReference type="SGD" id="S000004968">
    <property type="gene designation" value="FAP1"/>
</dbReference>
<dbReference type="VEuPathDB" id="FungiDB:YNL023C"/>
<dbReference type="eggNOG" id="KOG1952">
    <property type="taxonomic scope" value="Eukaryota"/>
</dbReference>
<dbReference type="GeneTree" id="ENSGT00940000156325"/>
<dbReference type="HOGENOM" id="CLU_005714_2_2_1"/>
<dbReference type="InParanoid" id="P53971"/>
<dbReference type="OMA" id="KCQSVCH"/>
<dbReference type="OrthoDB" id="6512771at2759"/>
<dbReference type="BioCyc" id="YEAST:G3O-33061-MONOMER"/>
<dbReference type="BioGRID-ORCS" id="855708">
    <property type="hits" value="0 hits in 10 CRISPR screens"/>
</dbReference>
<dbReference type="PRO" id="PR:P53971"/>
<dbReference type="Proteomes" id="UP000002311">
    <property type="component" value="Chromosome XIV"/>
</dbReference>
<dbReference type="RNAct" id="P53971">
    <property type="molecule type" value="protein"/>
</dbReference>
<dbReference type="GO" id="GO:0005737">
    <property type="term" value="C:cytoplasm"/>
    <property type="evidence" value="ECO:0000314"/>
    <property type="project" value="SGD"/>
</dbReference>
<dbReference type="GO" id="GO:0005634">
    <property type="term" value="C:nucleus"/>
    <property type="evidence" value="ECO:0000318"/>
    <property type="project" value="GO_Central"/>
</dbReference>
<dbReference type="GO" id="GO:0000981">
    <property type="term" value="F:DNA-binding transcription factor activity, RNA polymerase II-specific"/>
    <property type="evidence" value="ECO:0000318"/>
    <property type="project" value="GO_Central"/>
</dbReference>
<dbReference type="GO" id="GO:0000977">
    <property type="term" value="F:RNA polymerase II transcription regulatory region sequence-specific DNA binding"/>
    <property type="evidence" value="ECO:0000318"/>
    <property type="project" value="GO_Central"/>
</dbReference>
<dbReference type="GO" id="GO:0008270">
    <property type="term" value="F:zinc ion binding"/>
    <property type="evidence" value="ECO:0007669"/>
    <property type="project" value="UniProtKB-KW"/>
</dbReference>
<dbReference type="GO" id="GO:0000122">
    <property type="term" value="P:negative regulation of transcription by RNA polymerase II"/>
    <property type="evidence" value="ECO:0000318"/>
    <property type="project" value="GO_Central"/>
</dbReference>
<dbReference type="GO" id="GO:0070651">
    <property type="term" value="P:nonfunctional rRNA decay"/>
    <property type="evidence" value="ECO:0000314"/>
    <property type="project" value="SGD"/>
</dbReference>
<dbReference type="CDD" id="cd06008">
    <property type="entry name" value="NF-X1-zinc-finger"/>
    <property type="match status" value="4"/>
</dbReference>
<dbReference type="CDD" id="cd06006">
    <property type="entry name" value="R3H_unknown_2"/>
    <property type="match status" value="1"/>
</dbReference>
<dbReference type="CDD" id="cd16492">
    <property type="entry name" value="RING-CH-C4HC3_NFX1-like"/>
    <property type="match status" value="1"/>
</dbReference>
<dbReference type="FunFam" id="3.30.1370.50:FF:000006">
    <property type="entry name" value="NF-X1 finger transcription factor"/>
    <property type="match status" value="1"/>
</dbReference>
<dbReference type="Gene3D" id="3.30.1370.50">
    <property type="entry name" value="R3H-like domain"/>
    <property type="match status" value="1"/>
</dbReference>
<dbReference type="InterPro" id="IPR034078">
    <property type="entry name" value="NFX1_fam"/>
</dbReference>
<dbReference type="InterPro" id="IPR001374">
    <property type="entry name" value="R3H_dom"/>
</dbReference>
<dbReference type="InterPro" id="IPR036867">
    <property type="entry name" value="R3H_dom_sf"/>
</dbReference>
<dbReference type="InterPro" id="IPR034077">
    <property type="entry name" value="R3H_FAP1"/>
</dbReference>
<dbReference type="InterPro" id="IPR000967">
    <property type="entry name" value="Znf_NFX1"/>
</dbReference>
<dbReference type="InterPro" id="IPR001841">
    <property type="entry name" value="Znf_RING"/>
</dbReference>
<dbReference type="PANTHER" id="PTHR12360">
    <property type="entry name" value="NUCLEAR TRANSCRIPTION FACTOR, X-BOX BINDING 1 NFX1"/>
    <property type="match status" value="1"/>
</dbReference>
<dbReference type="PANTHER" id="PTHR12360:SF12">
    <property type="entry name" value="TRANSCRIPTIONAL REPRESSOR NF-X1"/>
    <property type="match status" value="1"/>
</dbReference>
<dbReference type="Pfam" id="PF01424">
    <property type="entry name" value="R3H"/>
    <property type="match status" value="1"/>
</dbReference>
<dbReference type="Pfam" id="PF01422">
    <property type="entry name" value="zf-NF-X1"/>
    <property type="match status" value="5"/>
</dbReference>
<dbReference type="SMART" id="SM00393">
    <property type="entry name" value="R3H"/>
    <property type="match status" value="1"/>
</dbReference>
<dbReference type="SMART" id="SM00438">
    <property type="entry name" value="ZnF_NFX"/>
    <property type="match status" value="7"/>
</dbReference>
<dbReference type="SUPFAM" id="SSF82708">
    <property type="entry name" value="R3H domain"/>
    <property type="match status" value="1"/>
</dbReference>
<dbReference type="SUPFAM" id="SSF57850">
    <property type="entry name" value="RING/U-box"/>
    <property type="match status" value="1"/>
</dbReference>
<dbReference type="PROSITE" id="PS51061">
    <property type="entry name" value="R3H"/>
    <property type="match status" value="1"/>
</dbReference>
<dbReference type="PROSITE" id="PS50089">
    <property type="entry name" value="ZF_RING_2"/>
    <property type="match status" value="1"/>
</dbReference>
<sequence length="965" mass="108495">MTEHESLGLEQNQDGGDTYRHHNLSDGCISSVEDANEQPSSYEEESDDDMQYYERAIQEISSGDSYVCMICTVEMDYTCQMFACKRCYRVFDYGCIREWALKSTEKTVDRIWKCPNCYYVSKRVPVKNRPTCWCGKVVNPDPNPLDPNSCGQTCNASTCMHGCSKICHLGPHPECTRMVEIMCHCGKHSKSIFCYQSKVMKKNFNCQEVCGLPLSCSIHTCKKKCHPGLCGPCPEMIISKDSPKKQIKCYCGNHTRANIKCSETKFPKSGKSSKDENGNRWIGVFACADNRVVDYSCRKHSFIESCISPPTINGEKACPFLPSSLKTCPCGRTALEELTKPRKHCDDPIPTCDSRCGKPLKCGKHSCPFTCHDKACMEPCLQIDSVKCACEQSTFSVPCGFQGRPRCNIKCESLMSCRRHRCTDRCCSGRPSAIRRKKNLFRTQDLLDESLVEAKHICLKPCNLTLSCGIHKCQRKCHPGKCPPCLESDSNDLVCPCGNTVVPAPVRCGTKLPTCNHPCIKVVRGESTCGHKPMPHTCHSLDVSCPPCTETVFKPCKCGKKTKVRTVCFQTDVSCGIKCGIPLSYCYHTCQKTCHLPGNCQKVCKQTCGQKRLNCNHECPKPCHGKTECPDLPCATLVKIYCKCGRIKKSVTCGAKSDRVSVTESSVLDCNEECEALKRLKELKEAFGIKEETNNFTSNELDALKKLVSVATTFEELQLPFTEAALSVYSKQERWCSQIEAILNKLMDDKTRSSLHFKPMRPPQRHFIRELAKAYGLYSESQDREPMRSVFIKKEDNGASNKPVLSLAEAYPLYESFKQLQKERKAQEFQARTTAKLINFEVQDTEPKVEVAKKNGFLVQNLVAGNTAEDLRRFFEPHLKHTLVVNPQYLILDDGKTALVYPENYETASVNTERDMELLVGHFDFMAKEAFLADSISLCSTEEELERRLDTPVIQEDSPVMDNNT</sequence>
<organism>
    <name type="scientific">Saccharomyces cerevisiae (strain ATCC 204508 / S288c)</name>
    <name type="common">Baker's yeast</name>
    <dbReference type="NCBI Taxonomy" id="559292"/>
    <lineage>
        <taxon>Eukaryota</taxon>
        <taxon>Fungi</taxon>
        <taxon>Dikarya</taxon>
        <taxon>Ascomycota</taxon>
        <taxon>Saccharomycotina</taxon>
        <taxon>Saccharomycetes</taxon>
        <taxon>Saccharomycetales</taxon>
        <taxon>Saccharomycetaceae</taxon>
        <taxon>Saccharomyces</taxon>
    </lineage>
</organism>
<keyword id="KW-0963">Cytoplasm</keyword>
<keyword id="KW-0479">Metal-binding</keyword>
<keyword id="KW-0539">Nucleus</keyword>
<keyword id="KW-0597">Phosphoprotein</keyword>
<keyword id="KW-1185">Reference proteome</keyword>
<keyword id="KW-0677">Repeat</keyword>
<keyword id="KW-0804">Transcription</keyword>
<keyword id="KW-0805">Transcription regulation</keyword>
<keyword id="KW-0862">Zinc</keyword>
<keyword id="KW-0863">Zinc-finger</keyword>
<feature type="chain" id="PRO_0000056343" description="FKBP12-associated protein 1">
    <location>
        <begin position="1"/>
        <end position="965"/>
    </location>
</feature>
<feature type="domain" description="R3H" evidence="3">
    <location>
        <begin position="733"/>
        <end position="796"/>
    </location>
</feature>
<feature type="zinc finger region" description="RING-type; degenerate" evidence="2">
    <location>
        <begin position="68"/>
        <end position="118"/>
    </location>
</feature>
<feature type="zinc finger region" description="NF-X1-type 1">
    <location>
        <begin position="159"/>
        <end position="177"/>
    </location>
</feature>
<feature type="zinc finger region" description="NF-X1-type 2">
    <location>
        <begin position="216"/>
        <end position="235"/>
    </location>
</feature>
<feature type="zinc finger region" description="NF-X1-type 3">
    <location>
        <begin position="362"/>
        <end position="382"/>
    </location>
</feature>
<feature type="zinc finger region" description="NF-X1-type 4">
    <location>
        <begin position="468"/>
        <end position="487"/>
    </location>
</feature>
<feature type="zinc finger region" description="NF-X1-type 5">
    <location>
        <begin position="586"/>
        <end position="606"/>
    </location>
</feature>
<feature type="modified residue" description="Phosphothreonine" evidence="8">
    <location>
        <position position="951"/>
    </location>
</feature>
<feature type="modified residue" description="Phosphoserine" evidence="7">
    <location>
        <position position="958"/>
    </location>
</feature>
<accession>P53971</accession>
<accession>D6W1F6</accession>
<name>FAP1_YEAST</name>
<evidence type="ECO:0000250" key="1"/>
<evidence type="ECO:0000255" key="2">
    <source>
        <dbReference type="PROSITE-ProRule" id="PRU00175"/>
    </source>
</evidence>
<evidence type="ECO:0000255" key="3">
    <source>
        <dbReference type="PROSITE-ProRule" id="PRU00382"/>
    </source>
</evidence>
<evidence type="ECO:0000269" key="4">
    <source>
    </source>
</evidence>
<evidence type="ECO:0000269" key="5">
    <source>
    </source>
</evidence>
<evidence type="ECO:0000305" key="6"/>
<evidence type="ECO:0007744" key="7">
    <source>
    </source>
</evidence>
<evidence type="ECO:0007744" key="8">
    <source>
    </source>
</evidence>
<proteinExistence type="evidence at protein level"/>